<accession>Q65I36</accession>
<accession>Q62TI5</accession>
<feature type="chain" id="PRO_0000098740" description="Tryptophan synthase alpha chain">
    <location>
        <begin position="1"/>
        <end position="267"/>
    </location>
</feature>
<feature type="active site" description="Proton acceptor" evidence="1">
    <location>
        <position position="43"/>
    </location>
</feature>
<feature type="active site" description="Proton acceptor" evidence="1">
    <location>
        <position position="54"/>
    </location>
</feature>
<proteinExistence type="inferred from homology"/>
<evidence type="ECO:0000255" key="1">
    <source>
        <dbReference type="HAMAP-Rule" id="MF_00131"/>
    </source>
</evidence>
<sequence>MFNLKKQPSDKLFVPFITAGDPLPEISIELAKSLQEAGASALELGVPYSDPLADGPVIQRASKRALDNDMNIVKAIRLGGEMKKNGVHIPIILFTYYNPVLQLDTDHFFALLRQNQLDGLLVPDLPFEESVYLQQQCKKHGITYISLVAPTSESRIQKITQQAEGFVYCVSSLGVTGVRNEFEDSVSSFIRSVKGMSSVPVAVGFGISSSKQVEMMNELADGVVVGSALVRKIEELKDELVAPETREQALKAFEAYAKTFSGSYMVK</sequence>
<keyword id="KW-0028">Amino-acid biosynthesis</keyword>
<keyword id="KW-0057">Aromatic amino acid biosynthesis</keyword>
<keyword id="KW-0456">Lyase</keyword>
<keyword id="KW-1185">Reference proteome</keyword>
<keyword id="KW-0822">Tryptophan biosynthesis</keyword>
<gene>
    <name evidence="1" type="primary">trpA</name>
    <name type="ordered locus">BLi02398</name>
    <name type="ordered locus">BL02770</name>
</gene>
<organism>
    <name type="scientific">Bacillus licheniformis (strain ATCC 14580 / DSM 13 / JCM 2505 / CCUG 7422 / NBRC 12200 / NCIMB 9375 / NCTC 10341 / NRRL NRS-1264 / Gibson 46)</name>
    <dbReference type="NCBI Taxonomy" id="279010"/>
    <lineage>
        <taxon>Bacteria</taxon>
        <taxon>Bacillati</taxon>
        <taxon>Bacillota</taxon>
        <taxon>Bacilli</taxon>
        <taxon>Bacillales</taxon>
        <taxon>Bacillaceae</taxon>
        <taxon>Bacillus</taxon>
    </lineage>
</organism>
<dbReference type="EC" id="4.2.1.20" evidence="1"/>
<dbReference type="EMBL" id="AE017333">
    <property type="protein sequence ID" value="AAU41278.1"/>
    <property type="molecule type" value="Genomic_DNA"/>
</dbReference>
<dbReference type="EMBL" id="CP000002">
    <property type="protein sequence ID" value="AAU23924.1"/>
    <property type="molecule type" value="Genomic_DNA"/>
</dbReference>
<dbReference type="RefSeq" id="WP_003182972.1">
    <property type="nucleotide sequence ID" value="NC_006322.1"/>
</dbReference>
<dbReference type="SMR" id="Q65I36"/>
<dbReference type="STRING" id="279010.BL02770"/>
<dbReference type="GeneID" id="92861002"/>
<dbReference type="KEGG" id="bld:BLi02398"/>
<dbReference type="KEGG" id="bli:BL02770"/>
<dbReference type="eggNOG" id="COG0159">
    <property type="taxonomic scope" value="Bacteria"/>
</dbReference>
<dbReference type="HOGENOM" id="CLU_016734_0_0_9"/>
<dbReference type="UniPathway" id="UPA00035">
    <property type="reaction ID" value="UER00044"/>
</dbReference>
<dbReference type="Proteomes" id="UP000000606">
    <property type="component" value="Chromosome"/>
</dbReference>
<dbReference type="Bgee" id="BL02770">
    <property type="expression patterns" value="Expressed in skin epidermis and 2 other cell types or tissues"/>
</dbReference>
<dbReference type="GO" id="GO:0005829">
    <property type="term" value="C:cytosol"/>
    <property type="evidence" value="ECO:0007669"/>
    <property type="project" value="TreeGrafter"/>
</dbReference>
<dbReference type="GO" id="GO:0004834">
    <property type="term" value="F:tryptophan synthase activity"/>
    <property type="evidence" value="ECO:0007669"/>
    <property type="project" value="UniProtKB-UniRule"/>
</dbReference>
<dbReference type="CDD" id="cd04724">
    <property type="entry name" value="Tryptophan_synthase_alpha"/>
    <property type="match status" value="1"/>
</dbReference>
<dbReference type="FunFam" id="3.20.20.70:FF:000037">
    <property type="entry name" value="Tryptophan synthase alpha chain"/>
    <property type="match status" value="1"/>
</dbReference>
<dbReference type="Gene3D" id="3.20.20.70">
    <property type="entry name" value="Aldolase class I"/>
    <property type="match status" value="1"/>
</dbReference>
<dbReference type="HAMAP" id="MF_00131">
    <property type="entry name" value="Trp_synth_alpha"/>
    <property type="match status" value="1"/>
</dbReference>
<dbReference type="InterPro" id="IPR013785">
    <property type="entry name" value="Aldolase_TIM"/>
</dbReference>
<dbReference type="InterPro" id="IPR011060">
    <property type="entry name" value="RibuloseP-bd_barrel"/>
</dbReference>
<dbReference type="InterPro" id="IPR018204">
    <property type="entry name" value="Trp_synthase_alpha_AS"/>
</dbReference>
<dbReference type="InterPro" id="IPR002028">
    <property type="entry name" value="Trp_synthase_suA"/>
</dbReference>
<dbReference type="NCBIfam" id="TIGR00262">
    <property type="entry name" value="trpA"/>
    <property type="match status" value="1"/>
</dbReference>
<dbReference type="PANTHER" id="PTHR43406:SF1">
    <property type="entry name" value="TRYPTOPHAN SYNTHASE ALPHA CHAIN, CHLOROPLASTIC"/>
    <property type="match status" value="1"/>
</dbReference>
<dbReference type="PANTHER" id="PTHR43406">
    <property type="entry name" value="TRYPTOPHAN SYNTHASE, ALPHA CHAIN"/>
    <property type="match status" value="1"/>
</dbReference>
<dbReference type="Pfam" id="PF00290">
    <property type="entry name" value="Trp_syntA"/>
    <property type="match status" value="1"/>
</dbReference>
<dbReference type="SUPFAM" id="SSF51366">
    <property type="entry name" value="Ribulose-phoshate binding barrel"/>
    <property type="match status" value="1"/>
</dbReference>
<dbReference type="PROSITE" id="PS00167">
    <property type="entry name" value="TRP_SYNTHASE_ALPHA"/>
    <property type="match status" value="1"/>
</dbReference>
<comment type="function">
    <text evidence="1">The alpha subunit is responsible for the aldol cleavage of indoleglycerol phosphate to indole and glyceraldehyde 3-phosphate.</text>
</comment>
<comment type="catalytic activity">
    <reaction evidence="1">
        <text>(1S,2R)-1-C-(indol-3-yl)glycerol 3-phosphate + L-serine = D-glyceraldehyde 3-phosphate + L-tryptophan + H2O</text>
        <dbReference type="Rhea" id="RHEA:10532"/>
        <dbReference type="ChEBI" id="CHEBI:15377"/>
        <dbReference type="ChEBI" id="CHEBI:33384"/>
        <dbReference type="ChEBI" id="CHEBI:57912"/>
        <dbReference type="ChEBI" id="CHEBI:58866"/>
        <dbReference type="ChEBI" id="CHEBI:59776"/>
        <dbReference type="EC" id="4.2.1.20"/>
    </reaction>
</comment>
<comment type="pathway">
    <text evidence="1">Amino-acid biosynthesis; L-tryptophan biosynthesis; L-tryptophan from chorismate: step 5/5.</text>
</comment>
<comment type="subunit">
    <text evidence="1">Tetramer of two alpha and two beta chains.</text>
</comment>
<comment type="similarity">
    <text evidence="1">Belongs to the TrpA family.</text>
</comment>
<protein>
    <recommendedName>
        <fullName evidence="1">Tryptophan synthase alpha chain</fullName>
        <ecNumber evidence="1">4.2.1.20</ecNumber>
    </recommendedName>
</protein>
<name>TRPA_BACLD</name>
<reference key="1">
    <citation type="journal article" date="2004" name="J. Mol. Microbiol. Biotechnol.">
        <title>The complete genome sequence of Bacillus licheniformis DSM13, an organism with great industrial potential.</title>
        <authorList>
            <person name="Veith B."/>
            <person name="Herzberg C."/>
            <person name="Steckel S."/>
            <person name="Feesche J."/>
            <person name="Maurer K.H."/>
            <person name="Ehrenreich P."/>
            <person name="Baeumer S."/>
            <person name="Henne A."/>
            <person name="Liesegang H."/>
            <person name="Merkl R."/>
            <person name="Ehrenreich A."/>
            <person name="Gottschalk G."/>
        </authorList>
    </citation>
    <scope>NUCLEOTIDE SEQUENCE [LARGE SCALE GENOMIC DNA]</scope>
    <source>
        <strain>ATCC 14580 / DSM 13 / JCM 2505 / CCUG 7422 / NBRC 12200 / NCIMB 9375 / NCTC 10341 / NRRL NRS-1264 / Gibson 46</strain>
    </source>
</reference>
<reference key="2">
    <citation type="journal article" date="2004" name="Genome Biol.">
        <title>Complete genome sequence of the industrial bacterium Bacillus licheniformis and comparisons with closely related Bacillus species.</title>
        <authorList>
            <person name="Rey M.W."/>
            <person name="Ramaiya P."/>
            <person name="Nelson B.A."/>
            <person name="Brody-Karpin S.D."/>
            <person name="Zaretsky E.J."/>
            <person name="Tang M."/>
            <person name="Lopez de Leon A."/>
            <person name="Xiang H."/>
            <person name="Gusti V."/>
            <person name="Clausen I.G."/>
            <person name="Olsen P.B."/>
            <person name="Rasmussen M.D."/>
            <person name="Andersen J.T."/>
            <person name="Joergensen P.L."/>
            <person name="Larsen T.S."/>
            <person name="Sorokin A."/>
            <person name="Bolotin A."/>
            <person name="Lapidus A."/>
            <person name="Galleron N."/>
            <person name="Ehrlich S.D."/>
            <person name="Berka R.M."/>
        </authorList>
    </citation>
    <scope>NUCLEOTIDE SEQUENCE [LARGE SCALE GENOMIC DNA]</scope>
    <source>
        <strain>ATCC 14580 / DSM 13 / JCM 2505 / CCUG 7422 / NBRC 12200 / NCIMB 9375 / NCTC 10341 / NRRL NRS-1264 / Gibson 46</strain>
    </source>
</reference>